<keyword id="KW-0963">Cytoplasm</keyword>
<keyword id="KW-0378">Hydrolase</keyword>
<keyword id="KW-0520">NAD</keyword>
<keyword id="KW-0554">One-carbon metabolism</keyword>
<protein>
    <recommendedName>
        <fullName evidence="1">Adenosylhomocysteinase</fullName>
        <ecNumber evidence="1">3.13.2.1</ecNumber>
    </recommendedName>
    <alternativeName>
        <fullName evidence="1">S-adenosyl-L-homocysteine hydrolase</fullName>
        <shortName evidence="1">AdoHcyase</shortName>
    </alternativeName>
</protein>
<reference key="1">
    <citation type="submission" date="2006-06" db="EMBL/GenBank/DDBJ databases">
        <title>Complete sequence of chromosome of Mesorhizobium sp. BNC1.</title>
        <authorList>
            <consortium name="US DOE Joint Genome Institute"/>
            <person name="Copeland A."/>
            <person name="Lucas S."/>
            <person name="Lapidus A."/>
            <person name="Barry K."/>
            <person name="Detter J.C."/>
            <person name="Glavina del Rio T."/>
            <person name="Hammon N."/>
            <person name="Israni S."/>
            <person name="Dalin E."/>
            <person name="Tice H."/>
            <person name="Pitluck S."/>
            <person name="Chertkov O."/>
            <person name="Brettin T."/>
            <person name="Bruce D."/>
            <person name="Han C."/>
            <person name="Tapia R."/>
            <person name="Gilna P."/>
            <person name="Schmutz J."/>
            <person name="Larimer F."/>
            <person name="Land M."/>
            <person name="Hauser L."/>
            <person name="Kyrpides N."/>
            <person name="Mikhailova N."/>
            <person name="Richardson P."/>
        </authorList>
    </citation>
    <scope>NUCLEOTIDE SEQUENCE [LARGE SCALE GENOMIC DNA]</scope>
    <source>
        <strain>BNC1</strain>
    </source>
</reference>
<sequence length="465" mass="50894">MAADDYVVADMSLAAWGRKEIEIAETEMPGLMACREEFGEAKPLKGARITGSLHMTIQTAVLIETLKSLGAEVRWASCNIFSTQDHAAAAIAETGTPVFAVKGETLEEYWTYTDRIFQWPDGQPSNMILDDGGDATMYILLGARAEAGEDVLSNPDGEEEEILFQQIKKRMAETPGFFTRQRAAIRGVTEETTTGVNRLYQLQKKGLLPFPAINVNDSVTKSKFDNKYGCKESLVDGIRRATDVMMAGKVAIVCGYGDVGKGSAQSLAGAGARVKVTEADPICALQAAMDGFEVVTLDEAIATADIIITATGNKDVVSLDHMRKMKDMVILGNIGHFDNEIQVAALRNFKWVNIKPQVDLIEFPDGKRIILLSEGRLLNLGNATGHPSFVMSASFTNQVLAQIELWTRGSQYENKVYVLPKHLDEKVARLHLAKLGANLTKLSPEQAAYIGVTPEGPFKPDHYRY</sequence>
<organism>
    <name type="scientific">Chelativorans sp. (strain BNC1)</name>
    <dbReference type="NCBI Taxonomy" id="266779"/>
    <lineage>
        <taxon>Bacteria</taxon>
        <taxon>Pseudomonadati</taxon>
        <taxon>Pseudomonadota</taxon>
        <taxon>Alphaproteobacteria</taxon>
        <taxon>Hyphomicrobiales</taxon>
        <taxon>Phyllobacteriaceae</taxon>
        <taxon>Chelativorans</taxon>
    </lineage>
</organism>
<name>SAHH_CHESB</name>
<feature type="chain" id="PRO_1000024731" description="Adenosylhomocysteinase">
    <location>
        <begin position="1"/>
        <end position="465"/>
    </location>
</feature>
<feature type="binding site" evidence="1">
    <location>
        <position position="56"/>
    </location>
    <ligand>
        <name>substrate</name>
    </ligand>
</feature>
<feature type="binding site" evidence="1">
    <location>
        <position position="131"/>
    </location>
    <ligand>
        <name>substrate</name>
    </ligand>
</feature>
<feature type="binding site" evidence="1">
    <location>
        <position position="191"/>
    </location>
    <ligand>
        <name>substrate</name>
    </ligand>
</feature>
<feature type="binding site" evidence="1">
    <location>
        <begin position="192"/>
        <end position="194"/>
    </location>
    <ligand>
        <name>NAD(+)</name>
        <dbReference type="ChEBI" id="CHEBI:57540"/>
    </ligand>
</feature>
<feature type="binding site" evidence="1">
    <location>
        <position position="221"/>
    </location>
    <ligand>
        <name>substrate</name>
    </ligand>
</feature>
<feature type="binding site" evidence="1">
    <location>
        <position position="225"/>
    </location>
    <ligand>
        <name>substrate</name>
    </ligand>
</feature>
<feature type="binding site" evidence="1">
    <location>
        <position position="226"/>
    </location>
    <ligand>
        <name>NAD(+)</name>
        <dbReference type="ChEBI" id="CHEBI:57540"/>
    </ligand>
</feature>
<feature type="binding site" evidence="1">
    <location>
        <begin position="255"/>
        <end position="260"/>
    </location>
    <ligand>
        <name>NAD(+)</name>
        <dbReference type="ChEBI" id="CHEBI:57540"/>
    </ligand>
</feature>
<feature type="binding site" evidence="1">
    <location>
        <position position="278"/>
    </location>
    <ligand>
        <name>NAD(+)</name>
        <dbReference type="ChEBI" id="CHEBI:57540"/>
    </ligand>
</feature>
<feature type="binding site" evidence="1">
    <location>
        <position position="313"/>
    </location>
    <ligand>
        <name>NAD(+)</name>
        <dbReference type="ChEBI" id="CHEBI:57540"/>
    </ligand>
</feature>
<feature type="binding site" evidence="1">
    <location>
        <begin position="334"/>
        <end position="336"/>
    </location>
    <ligand>
        <name>NAD(+)</name>
        <dbReference type="ChEBI" id="CHEBI:57540"/>
    </ligand>
</feature>
<feature type="binding site" evidence="1">
    <location>
        <position position="379"/>
    </location>
    <ligand>
        <name>NAD(+)</name>
        <dbReference type="ChEBI" id="CHEBI:57540"/>
    </ligand>
</feature>
<comment type="function">
    <text evidence="1">May play a key role in the regulation of the intracellular concentration of adenosylhomocysteine.</text>
</comment>
<comment type="catalytic activity">
    <reaction evidence="1">
        <text>S-adenosyl-L-homocysteine + H2O = L-homocysteine + adenosine</text>
        <dbReference type="Rhea" id="RHEA:21708"/>
        <dbReference type="ChEBI" id="CHEBI:15377"/>
        <dbReference type="ChEBI" id="CHEBI:16335"/>
        <dbReference type="ChEBI" id="CHEBI:57856"/>
        <dbReference type="ChEBI" id="CHEBI:58199"/>
        <dbReference type="EC" id="3.13.2.1"/>
    </reaction>
</comment>
<comment type="cofactor">
    <cofactor evidence="1">
        <name>NAD(+)</name>
        <dbReference type="ChEBI" id="CHEBI:57540"/>
    </cofactor>
    <text evidence="1">Binds 1 NAD(+) per subunit.</text>
</comment>
<comment type="pathway">
    <text evidence="1">Amino-acid biosynthesis; L-homocysteine biosynthesis; L-homocysteine from S-adenosyl-L-homocysteine: step 1/1.</text>
</comment>
<comment type="subcellular location">
    <subcellularLocation>
        <location evidence="1">Cytoplasm</location>
    </subcellularLocation>
</comment>
<comment type="similarity">
    <text evidence="1">Belongs to the adenosylhomocysteinase family.</text>
</comment>
<gene>
    <name evidence="1" type="primary">ahcY</name>
    <name type="ordered locus">Meso_3576</name>
</gene>
<evidence type="ECO:0000255" key="1">
    <source>
        <dbReference type="HAMAP-Rule" id="MF_00563"/>
    </source>
</evidence>
<accession>Q11CD0</accession>
<dbReference type="EC" id="3.13.2.1" evidence="1"/>
<dbReference type="EMBL" id="CP000390">
    <property type="protein sequence ID" value="ABG64945.1"/>
    <property type="molecule type" value="Genomic_DNA"/>
</dbReference>
<dbReference type="SMR" id="Q11CD0"/>
<dbReference type="STRING" id="266779.Meso_3576"/>
<dbReference type="KEGG" id="mes:Meso_3576"/>
<dbReference type="eggNOG" id="COG0499">
    <property type="taxonomic scope" value="Bacteria"/>
</dbReference>
<dbReference type="HOGENOM" id="CLU_025194_2_1_5"/>
<dbReference type="OrthoDB" id="9802717at2"/>
<dbReference type="UniPathway" id="UPA00314">
    <property type="reaction ID" value="UER00076"/>
</dbReference>
<dbReference type="GO" id="GO:0005829">
    <property type="term" value="C:cytosol"/>
    <property type="evidence" value="ECO:0007669"/>
    <property type="project" value="TreeGrafter"/>
</dbReference>
<dbReference type="GO" id="GO:0004013">
    <property type="term" value="F:adenosylhomocysteinase activity"/>
    <property type="evidence" value="ECO:0007669"/>
    <property type="project" value="UniProtKB-UniRule"/>
</dbReference>
<dbReference type="GO" id="GO:0071269">
    <property type="term" value="P:L-homocysteine biosynthetic process"/>
    <property type="evidence" value="ECO:0007669"/>
    <property type="project" value="UniProtKB-UniRule"/>
</dbReference>
<dbReference type="GO" id="GO:0006730">
    <property type="term" value="P:one-carbon metabolic process"/>
    <property type="evidence" value="ECO:0007669"/>
    <property type="project" value="UniProtKB-KW"/>
</dbReference>
<dbReference type="GO" id="GO:0033353">
    <property type="term" value="P:S-adenosylmethionine cycle"/>
    <property type="evidence" value="ECO:0007669"/>
    <property type="project" value="TreeGrafter"/>
</dbReference>
<dbReference type="CDD" id="cd00401">
    <property type="entry name" value="SAHH"/>
    <property type="match status" value="1"/>
</dbReference>
<dbReference type="FunFam" id="3.40.50.720:FF:000004">
    <property type="entry name" value="Adenosylhomocysteinase"/>
    <property type="match status" value="1"/>
</dbReference>
<dbReference type="Gene3D" id="3.40.50.1480">
    <property type="entry name" value="Adenosylhomocysteinase-like"/>
    <property type="match status" value="1"/>
</dbReference>
<dbReference type="Gene3D" id="3.40.50.720">
    <property type="entry name" value="NAD(P)-binding Rossmann-like Domain"/>
    <property type="match status" value="1"/>
</dbReference>
<dbReference type="HAMAP" id="MF_00563">
    <property type="entry name" value="AdoHcyase"/>
    <property type="match status" value="1"/>
</dbReference>
<dbReference type="InterPro" id="IPR042172">
    <property type="entry name" value="Adenosylhomocyst_ase-like_sf"/>
</dbReference>
<dbReference type="InterPro" id="IPR000043">
    <property type="entry name" value="Adenosylhomocysteinase-like"/>
</dbReference>
<dbReference type="InterPro" id="IPR015878">
    <property type="entry name" value="Ado_hCys_hydrolase_NAD-bd"/>
</dbReference>
<dbReference type="InterPro" id="IPR036291">
    <property type="entry name" value="NAD(P)-bd_dom_sf"/>
</dbReference>
<dbReference type="InterPro" id="IPR020082">
    <property type="entry name" value="S-Ado-L-homoCys_hydrolase_CS"/>
</dbReference>
<dbReference type="NCBIfam" id="TIGR00936">
    <property type="entry name" value="ahcY"/>
    <property type="match status" value="1"/>
</dbReference>
<dbReference type="NCBIfam" id="NF004005">
    <property type="entry name" value="PRK05476.2-3"/>
    <property type="match status" value="1"/>
</dbReference>
<dbReference type="PANTHER" id="PTHR23420">
    <property type="entry name" value="ADENOSYLHOMOCYSTEINASE"/>
    <property type="match status" value="1"/>
</dbReference>
<dbReference type="PANTHER" id="PTHR23420:SF0">
    <property type="entry name" value="ADENOSYLHOMOCYSTEINASE"/>
    <property type="match status" value="1"/>
</dbReference>
<dbReference type="Pfam" id="PF05221">
    <property type="entry name" value="AdoHcyase"/>
    <property type="match status" value="1"/>
</dbReference>
<dbReference type="Pfam" id="PF00670">
    <property type="entry name" value="AdoHcyase_NAD"/>
    <property type="match status" value="1"/>
</dbReference>
<dbReference type="PIRSF" id="PIRSF001109">
    <property type="entry name" value="Ad_hcy_hydrolase"/>
    <property type="match status" value="1"/>
</dbReference>
<dbReference type="SMART" id="SM00996">
    <property type="entry name" value="AdoHcyase"/>
    <property type="match status" value="1"/>
</dbReference>
<dbReference type="SMART" id="SM00997">
    <property type="entry name" value="AdoHcyase_NAD"/>
    <property type="match status" value="1"/>
</dbReference>
<dbReference type="SUPFAM" id="SSF52283">
    <property type="entry name" value="Formate/glycerate dehydrogenase catalytic domain-like"/>
    <property type="match status" value="1"/>
</dbReference>
<dbReference type="SUPFAM" id="SSF51735">
    <property type="entry name" value="NAD(P)-binding Rossmann-fold domains"/>
    <property type="match status" value="1"/>
</dbReference>
<dbReference type="PROSITE" id="PS00738">
    <property type="entry name" value="ADOHCYASE_1"/>
    <property type="match status" value="1"/>
</dbReference>
<dbReference type="PROSITE" id="PS00739">
    <property type="entry name" value="ADOHCYASE_2"/>
    <property type="match status" value="1"/>
</dbReference>
<proteinExistence type="inferred from homology"/>